<reference key="1">
    <citation type="journal article" date="1999" name="Biochim. Biophys. Acta">
        <title>Cloning of ClC-2 chloride channel from murine duodenum and its presence in CFTR knockout mice.</title>
        <authorList>
            <person name="Joo N.S."/>
            <person name="Clarke L.L."/>
            <person name="Han B.H."/>
            <person name="Forte L.R."/>
            <person name="Kim H.D."/>
        </authorList>
    </citation>
    <scope>NUCLEOTIDE SEQUENCE [MRNA]</scope>
    <source>
        <strain>C57BL/6J</strain>
        <tissue>Duodenal mucosa</tissue>
    </source>
</reference>
<reference key="2">
    <citation type="submission" date="1999-03" db="EMBL/GenBank/DDBJ databases">
        <title>CFTR and ClC-2 expression levels in the fetal mouse lung.</title>
        <authorList>
            <person name="Hathaway J.K."/>
            <person name="Rice W.R."/>
            <person name="Wert S."/>
            <person name="Whitsett J.A."/>
        </authorList>
    </citation>
    <scope>NUCLEOTIDE SEQUENCE [MRNA]</scope>
    <source>
        <strain>FVB/N</strain>
    </source>
</reference>
<reference key="3">
    <citation type="journal article" date="2009" name="PLoS Biol.">
        <title>Lineage-specific biology revealed by a finished genome assembly of the mouse.</title>
        <authorList>
            <person name="Church D.M."/>
            <person name="Goodstadt L."/>
            <person name="Hillier L.W."/>
            <person name="Zody M.C."/>
            <person name="Goldstein S."/>
            <person name="She X."/>
            <person name="Bult C.J."/>
            <person name="Agarwala R."/>
            <person name="Cherry J.L."/>
            <person name="DiCuccio M."/>
            <person name="Hlavina W."/>
            <person name="Kapustin Y."/>
            <person name="Meric P."/>
            <person name="Maglott D."/>
            <person name="Birtle Z."/>
            <person name="Marques A.C."/>
            <person name="Graves T."/>
            <person name="Zhou S."/>
            <person name="Teague B."/>
            <person name="Potamousis K."/>
            <person name="Churas C."/>
            <person name="Place M."/>
            <person name="Herschleb J."/>
            <person name="Runnheim R."/>
            <person name="Forrest D."/>
            <person name="Amos-Landgraf J."/>
            <person name="Schwartz D.C."/>
            <person name="Cheng Z."/>
            <person name="Lindblad-Toh K."/>
            <person name="Eichler E.E."/>
            <person name="Ponting C.P."/>
        </authorList>
    </citation>
    <scope>NUCLEOTIDE SEQUENCE [LARGE SCALE GENOMIC DNA]</scope>
    <source>
        <strain>C57BL/6J</strain>
    </source>
</reference>
<reference key="4">
    <citation type="journal article" date="2004" name="Genome Res.">
        <title>The status, quality, and expansion of the NIH full-length cDNA project: the Mammalian Gene Collection (MGC).</title>
        <authorList>
            <consortium name="The MGC Project Team"/>
        </authorList>
    </citation>
    <scope>NUCLEOTIDE SEQUENCE [LARGE SCALE MRNA]</scope>
    <source>
        <tissue>Brain</tissue>
    </source>
</reference>
<reference key="5">
    <citation type="journal article" date="2005" name="J. Cell Sci.">
        <title>Basolateral localization of native ClC-2 chloride channels in absorptive intestinal epithelial cells and basolateral sorting encoded by a CBS-2 domain di-leucine motif.</title>
        <authorList>
            <person name="Pena-Muenzenmayer G."/>
            <person name="Catalan M."/>
            <person name="Cornejo I."/>
            <person name="Figueroa C.D."/>
            <person name="Melvin J.E."/>
            <person name="Niemeyer M.I."/>
            <person name="Cid L.P."/>
            <person name="Sepulveda F.V."/>
        </authorList>
    </citation>
    <scope>SUBCELLULAR LOCATION</scope>
    <scope>TISSUE SPECIFICITY</scope>
</reference>
<reference key="6">
    <citation type="journal article" date="2007" name="J. Neurosci.">
        <title>Leukoencephalopathy upon disruption of the chloride channel ClC-2.</title>
        <authorList>
            <person name="Blanz J."/>
            <person name="Schweizer M."/>
            <person name="Auberson M."/>
            <person name="Maier H."/>
            <person name="Muenscher A."/>
            <person name="Huebner C.A."/>
            <person name="Jentsch T.J."/>
        </authorList>
    </citation>
    <scope>FUNCTION</scope>
    <scope>DISRUPTION PHENOTYPE</scope>
    <scope>SUBCELLULAR LOCATION</scope>
    <scope>TISSUE SPECIFICITY</scope>
</reference>
<reference key="7">
    <citation type="journal article" date="2008" name="Am. J. Physiol.">
        <title>Clcn2 encodes the hyperpolarization-activated chloride channel in the ducts of mouse salivary glands.</title>
        <authorList>
            <person name="Romanenko V.G."/>
            <person name="Nakamoto T."/>
            <person name="Catalan M.A."/>
            <person name="Gonzalez-Begne M."/>
            <person name="Schwartz G.J."/>
            <person name="Jaramillo Y."/>
            <person name="Sepulveda F.V."/>
            <person name="Figueroa C.D."/>
            <person name="Melvin J.E."/>
        </authorList>
    </citation>
    <scope>FUNCTION</scope>
    <scope>TRANSPORTER ACTIVITY</scope>
    <scope>ACTIVITY REGULATION</scope>
    <scope>SUBCELLULAR LOCATION</scope>
    <scope>TISSUE SPECIFICITY</scope>
</reference>
<reference key="8">
    <citation type="journal article" date="2010" name="Cell">
        <title>A tissue-specific atlas of mouse protein phosphorylation and expression.</title>
        <authorList>
            <person name="Huttlin E.L."/>
            <person name="Jedrychowski M.P."/>
            <person name="Elias J.E."/>
            <person name="Goswami T."/>
            <person name="Rad R."/>
            <person name="Beausoleil S.A."/>
            <person name="Villen J."/>
            <person name="Haas W."/>
            <person name="Sowa M.E."/>
            <person name="Gygi S.P."/>
        </authorList>
    </citation>
    <scope>PHOSPHORYLATION [LARGE SCALE ANALYSIS] AT THR-28</scope>
    <scope>IDENTIFICATION BY MASS SPECTROMETRY [LARGE SCALE ANALYSIS]</scope>
    <source>
        <tissue>Spleen</tissue>
        <tissue>Testis</tissue>
    </source>
</reference>
<reference key="9">
    <citation type="journal article" date="2010" name="J. Neurosci.">
        <title>ClC-2 voltage-gated channels constitute part of the background conductance and assist chloride extrusion.</title>
        <authorList>
            <person name="Rinke I."/>
            <person name="Artmann J."/>
            <person name="Stein V."/>
        </authorList>
    </citation>
    <scope>FUNCTION</scope>
    <scope>TRANSPORTER ACTIVITY</scope>
    <scope>DISRUPTION PHENOTYPE</scope>
</reference>
<reference key="10">
    <citation type="journal article" date="2012" name="Gastroenterology">
        <title>Severe defects in absorptive ion transport in distal colons of mice that lack ClC-2 channels.</title>
        <authorList>
            <person name="Catalan M.A."/>
            <person name="Flores C.A."/>
            <person name="Gonzalez-Begne M."/>
            <person name="Zhang Y."/>
            <person name="Sepulveda F.V."/>
            <person name="Melvin J.E."/>
        </authorList>
    </citation>
    <scope>FUNCTION</scope>
    <scope>SUBCELLULAR LOCATION</scope>
    <scope>TISSUE SPECIFICITY</scope>
</reference>
<reference key="11">
    <citation type="journal article" date="2012" name="Neuron">
        <title>GlialCAM, a protein defective in a leukodystrophy, serves as a ClC-2 Cl(-) channel auxiliary subunit.</title>
        <authorList>
            <person name="Jeworutzki E."/>
            <person name="Lopez-Hernandez T."/>
            <person name="Capdevila-Nortes X."/>
            <person name="Sirisi S."/>
            <person name="Bengtsson L."/>
            <person name="Montolio M."/>
            <person name="Zifarelli G."/>
            <person name="Arnedo T."/>
            <person name="Mueller C.S."/>
            <person name="Schulte U."/>
            <person name="Nunes V."/>
            <person name="Martinez A."/>
            <person name="Jentsch T.J."/>
            <person name="Gasull X."/>
            <person name="Pusch M."/>
            <person name="Estevez R."/>
        </authorList>
    </citation>
    <scope>FUNCTION</scope>
    <scope>INTERACTION WITH HEPACAM</scope>
    <scope>SUBCELLULAR LOCATION</scope>
</reference>
<reference key="12">
    <citation type="journal article" date="2016" name="J. Gen. Physiol.">
        <title>Gating the glutamate gate of CLC-2 chloride channel by pore occupancy.</title>
        <authorList>
            <person name="De Jesus-Perez J.J."/>
            <person name="Castro-Chong A."/>
            <person name="Shieh R.C."/>
            <person name="Hernandez-Carballo C.Y."/>
            <person name="De Santiago-Castillo J.A."/>
            <person name="Arreola J."/>
        </authorList>
    </citation>
    <scope>FUNCTION</scope>
    <scope>TRANSPORTER ACTIVITY</scope>
    <scope>ACTIVITY REGULATION</scope>
    <scope>MUTAGENESIS OF HIS-538</scope>
</reference>
<reference key="13">
    <citation type="journal article" date="2018" name="Nat. Genet.">
        <title>CLCN2 chloride channel mutations in familial hyperaldosteronism type II.</title>
        <authorList>
            <person name="Scholl U.I."/>
            <person name="Stoelting G."/>
            <person name="Schewe J."/>
            <person name="Thiel A."/>
            <person name="Tan H."/>
            <person name="Nelson-Williams C."/>
            <person name="Vichot A.A."/>
            <person name="Jin S.C."/>
            <person name="Loring E."/>
            <person name="Untiet V."/>
            <person name="Yoo T."/>
            <person name="Choi J."/>
            <person name="Xu S."/>
            <person name="Wu A."/>
            <person name="Kirchner M."/>
            <person name="Mertins P."/>
            <person name="Rump L.C."/>
            <person name="Onder A.M."/>
            <person name="Gamble C."/>
            <person name="McKenney D."/>
            <person name="Lash R.W."/>
            <person name="Jones D.P."/>
            <person name="Chune G."/>
            <person name="Gagliardi P."/>
            <person name="Choi M."/>
            <person name="Gordon R."/>
            <person name="Stowasser M."/>
            <person name="Fahlke C."/>
            <person name="Lifton R.P."/>
        </authorList>
    </citation>
    <scope>TISSUE SPECIFICITY</scope>
</reference>
<reference key="14">
    <citation type="journal article" date="2018" name="Nat. Genet.">
        <title>A gain-of-function mutation in the CLCN2 chloride channel gene causes primary aldosteronism.</title>
        <authorList>
            <person name="Fernandes-Rosa F.L."/>
            <person name="Daniil G."/>
            <person name="Orozco I.J."/>
            <person name="Goeppner C."/>
            <person name="El Zein R."/>
            <person name="Jain V."/>
            <person name="Boulkroun S."/>
            <person name="Jeunemaitre X."/>
            <person name="Amar L."/>
            <person name="Lefebvre H."/>
            <person name="Schwarzmayr T."/>
            <person name="Strom T.M."/>
            <person name="Jentsch T.J."/>
            <person name="Zennaro M.C."/>
        </authorList>
    </citation>
    <scope>FUNCTION</scope>
    <scope>TISSUE SPECIFICITY</scope>
    <scope>DISRUPTION PHENOTYPE</scope>
</reference>
<accession>Q9R0A1</accession>
<accession>Q0VBC2</accession>
<accession>Q9WUJ9</accession>
<proteinExistence type="evidence at protein level"/>
<name>CLCN2_MOUSE</name>
<evidence type="ECO:0000250" key="1"/>
<evidence type="ECO:0000250" key="2">
    <source>
        <dbReference type="UniProtKB" id="P35525"/>
    </source>
</evidence>
<evidence type="ECO:0000250" key="3">
    <source>
        <dbReference type="UniProtKB" id="P51788"/>
    </source>
</evidence>
<evidence type="ECO:0000250" key="4">
    <source>
        <dbReference type="UniProtKB" id="Q9WU45"/>
    </source>
</evidence>
<evidence type="ECO:0000255" key="5"/>
<evidence type="ECO:0000255" key="6">
    <source>
        <dbReference type="PROSITE-ProRule" id="PRU00703"/>
    </source>
</evidence>
<evidence type="ECO:0000256" key="7">
    <source>
        <dbReference type="SAM" id="MobiDB-lite"/>
    </source>
</evidence>
<evidence type="ECO:0000269" key="8">
    <source>
    </source>
</evidence>
<evidence type="ECO:0000269" key="9">
    <source>
    </source>
</evidence>
<evidence type="ECO:0000269" key="10">
    <source>
    </source>
</evidence>
<evidence type="ECO:0000269" key="11">
    <source>
    </source>
</evidence>
<evidence type="ECO:0000269" key="12">
    <source>
    </source>
</evidence>
<evidence type="ECO:0000269" key="13">
    <source>
    </source>
</evidence>
<evidence type="ECO:0000269" key="14">
    <source>
    </source>
</evidence>
<evidence type="ECO:0000269" key="15">
    <source>
    </source>
</evidence>
<evidence type="ECO:0000305" key="16"/>
<evidence type="ECO:0007744" key="17">
    <source>
    </source>
</evidence>
<protein>
    <recommendedName>
        <fullName>Chloride channel protein 2</fullName>
        <shortName>ClC-2</shortName>
    </recommendedName>
</protein>
<keyword id="KW-0129">CBS domain</keyword>
<keyword id="KW-1003">Cell membrane</keyword>
<keyword id="KW-0966">Cell projection</keyword>
<keyword id="KW-0868">Chloride</keyword>
<keyword id="KW-0869">Chloride channel</keyword>
<keyword id="KW-0407">Ion channel</keyword>
<keyword id="KW-0406">Ion transport</keyword>
<keyword id="KW-0472">Membrane</keyword>
<keyword id="KW-0597">Phosphoprotein</keyword>
<keyword id="KW-0628">Postsynaptic cell membrane</keyword>
<keyword id="KW-1185">Reference proteome</keyword>
<keyword id="KW-0677">Repeat</keyword>
<keyword id="KW-0770">Synapse</keyword>
<keyword id="KW-0812">Transmembrane</keyword>
<keyword id="KW-1133">Transmembrane helix</keyword>
<keyword id="KW-0813">Transport</keyword>
<keyword id="KW-0851">Voltage-gated channel</keyword>
<dbReference type="EMBL" id="AF097415">
    <property type="protein sequence ID" value="AAD50604.1"/>
    <property type="molecule type" value="mRNA"/>
</dbReference>
<dbReference type="EMBL" id="AF139724">
    <property type="protein sequence ID" value="AAD26466.1"/>
    <property type="molecule type" value="mRNA"/>
</dbReference>
<dbReference type="EMBL" id="AC087898">
    <property type="status" value="NOT_ANNOTATED_CDS"/>
    <property type="molecule type" value="Genomic_DNA"/>
</dbReference>
<dbReference type="EMBL" id="CT010490">
    <property type="status" value="NOT_ANNOTATED_CDS"/>
    <property type="molecule type" value="Genomic_DNA"/>
</dbReference>
<dbReference type="EMBL" id="BC120699">
    <property type="protein sequence ID" value="AAI20700.1"/>
    <property type="molecule type" value="mRNA"/>
</dbReference>
<dbReference type="EMBL" id="BC137625">
    <property type="protein sequence ID" value="AAI37626.1"/>
    <property type="molecule type" value="mRNA"/>
</dbReference>
<dbReference type="CCDS" id="CCDS28057.1"/>
<dbReference type="RefSeq" id="NP_034030.2">
    <property type="nucleotide sequence ID" value="NM_009900.3"/>
</dbReference>
<dbReference type="SMR" id="Q9R0A1"/>
<dbReference type="BioGRID" id="198735">
    <property type="interactions" value="1"/>
</dbReference>
<dbReference type="FunCoup" id="Q9R0A1">
    <property type="interactions" value="61"/>
</dbReference>
<dbReference type="STRING" id="10090.ENSMUSP00000007207"/>
<dbReference type="GlyConnect" id="2209">
    <property type="glycosylation" value="1 N-Linked glycan (1 site)"/>
</dbReference>
<dbReference type="GlyCosmos" id="Q9R0A1">
    <property type="glycosylation" value="1 site, 1 glycan"/>
</dbReference>
<dbReference type="GlyGen" id="Q9R0A1">
    <property type="glycosylation" value="2 sites, 2 N-linked glycans (1 site)"/>
</dbReference>
<dbReference type="iPTMnet" id="Q9R0A1"/>
<dbReference type="PhosphoSitePlus" id="Q9R0A1"/>
<dbReference type="SwissPalm" id="Q9R0A1"/>
<dbReference type="PaxDb" id="10090-ENSMUSP00000007207"/>
<dbReference type="ProteomicsDB" id="285479"/>
<dbReference type="Antibodypedia" id="2994">
    <property type="antibodies" value="306 antibodies from 35 providers"/>
</dbReference>
<dbReference type="DNASU" id="12724"/>
<dbReference type="Ensembl" id="ENSMUST00000007207.15">
    <property type="protein sequence ID" value="ENSMUSP00000007207.9"/>
    <property type="gene ID" value="ENSMUSG00000022843.18"/>
</dbReference>
<dbReference type="GeneID" id="12724"/>
<dbReference type="KEGG" id="mmu:12724"/>
<dbReference type="UCSC" id="uc012ada.1">
    <property type="organism name" value="mouse"/>
</dbReference>
<dbReference type="AGR" id="MGI:105061"/>
<dbReference type="CTD" id="1181"/>
<dbReference type="MGI" id="MGI:105061">
    <property type="gene designation" value="Clcn2"/>
</dbReference>
<dbReference type="VEuPathDB" id="HostDB:ENSMUSG00000022843"/>
<dbReference type="eggNOG" id="KOG0476">
    <property type="taxonomic scope" value="Eukaryota"/>
</dbReference>
<dbReference type="GeneTree" id="ENSGT00940000155439"/>
<dbReference type="HOGENOM" id="CLU_006904_0_1_1"/>
<dbReference type="InParanoid" id="Q9R0A1"/>
<dbReference type="OMA" id="ACFMFNN"/>
<dbReference type="OrthoDB" id="4564at2759"/>
<dbReference type="PhylomeDB" id="Q9R0A1"/>
<dbReference type="TreeFam" id="TF300522"/>
<dbReference type="Reactome" id="R-MMU-2672351">
    <property type="pathway name" value="Stimuli-sensing channels"/>
</dbReference>
<dbReference type="BioGRID-ORCS" id="12724">
    <property type="hits" value="0 hits in 79 CRISPR screens"/>
</dbReference>
<dbReference type="PRO" id="PR:Q9R0A1"/>
<dbReference type="Proteomes" id="UP000000589">
    <property type="component" value="Chromosome 16"/>
</dbReference>
<dbReference type="RNAct" id="Q9R0A1">
    <property type="molecule type" value="protein"/>
</dbReference>
<dbReference type="Bgee" id="ENSMUSG00000022843">
    <property type="expression patterns" value="Expressed in dorsal pancreas and 212 other cell types or tissues"/>
</dbReference>
<dbReference type="ExpressionAtlas" id="Q9R0A1">
    <property type="expression patterns" value="baseline and differential"/>
</dbReference>
<dbReference type="GO" id="GO:0097450">
    <property type="term" value="C:astrocyte end-foot"/>
    <property type="evidence" value="ECO:0000314"/>
    <property type="project" value="UniProtKB"/>
</dbReference>
<dbReference type="GO" id="GO:0043194">
    <property type="term" value="C:axon initial segment"/>
    <property type="evidence" value="ECO:0007669"/>
    <property type="project" value="Ensembl"/>
</dbReference>
<dbReference type="GO" id="GO:0016323">
    <property type="term" value="C:basolateral plasma membrane"/>
    <property type="evidence" value="ECO:0000314"/>
    <property type="project" value="UniProtKB"/>
</dbReference>
<dbReference type="GO" id="GO:0034707">
    <property type="term" value="C:chloride channel complex"/>
    <property type="evidence" value="ECO:0007669"/>
    <property type="project" value="UniProtKB-KW"/>
</dbReference>
<dbReference type="GO" id="GO:0032591">
    <property type="term" value="C:dendritic spine membrane"/>
    <property type="evidence" value="ECO:0007669"/>
    <property type="project" value="UniProtKB-SubCell"/>
</dbReference>
<dbReference type="GO" id="GO:0043209">
    <property type="term" value="C:myelin sheath"/>
    <property type="evidence" value="ECO:0000314"/>
    <property type="project" value="UniProtKB"/>
</dbReference>
<dbReference type="GO" id="GO:0043204">
    <property type="term" value="C:perikaryon"/>
    <property type="evidence" value="ECO:0007669"/>
    <property type="project" value="Ensembl"/>
</dbReference>
<dbReference type="GO" id="GO:0005886">
    <property type="term" value="C:plasma membrane"/>
    <property type="evidence" value="ECO:0000250"/>
    <property type="project" value="UniProtKB"/>
</dbReference>
<dbReference type="GO" id="GO:0045211">
    <property type="term" value="C:postsynaptic membrane"/>
    <property type="evidence" value="ECO:0007669"/>
    <property type="project" value="UniProtKB-KW"/>
</dbReference>
<dbReference type="GO" id="GO:0017081">
    <property type="term" value="F:chloride channel regulator activity"/>
    <property type="evidence" value="ECO:0007669"/>
    <property type="project" value="Ensembl"/>
</dbReference>
<dbReference type="GO" id="GO:0005247">
    <property type="term" value="F:voltage-gated chloride channel activity"/>
    <property type="evidence" value="ECO:0000315"/>
    <property type="project" value="MGI"/>
</dbReference>
<dbReference type="GO" id="GO:0008308">
    <property type="term" value="F:voltage-gated monoatomic anion channel activity"/>
    <property type="evidence" value="ECO:0000314"/>
    <property type="project" value="UniProtKB"/>
</dbReference>
<dbReference type="GO" id="GO:0072320">
    <property type="term" value="F:volume-sensitive chloride channel activity"/>
    <property type="evidence" value="ECO:0007669"/>
    <property type="project" value="Ensembl"/>
</dbReference>
<dbReference type="GO" id="GO:0090425">
    <property type="term" value="P:acinar cell differentiation"/>
    <property type="evidence" value="ECO:0000315"/>
    <property type="project" value="MGI"/>
</dbReference>
<dbReference type="GO" id="GO:0060689">
    <property type="term" value="P:cell differentiation involved in salivary gland development"/>
    <property type="evidence" value="ECO:0000315"/>
    <property type="project" value="MGI"/>
</dbReference>
<dbReference type="GO" id="GO:0071476">
    <property type="term" value="P:cellular hypotonic response"/>
    <property type="evidence" value="ECO:0007669"/>
    <property type="project" value="Ensembl"/>
</dbReference>
<dbReference type="GO" id="GO:0006821">
    <property type="term" value="P:chloride transport"/>
    <property type="evidence" value="ECO:0000315"/>
    <property type="project" value="UniProtKB"/>
</dbReference>
<dbReference type="GO" id="GO:0030324">
    <property type="term" value="P:lung development"/>
    <property type="evidence" value="ECO:0007669"/>
    <property type="project" value="Ensembl"/>
</dbReference>
<dbReference type="GO" id="GO:0006911">
    <property type="term" value="P:phagocytosis, engulfment"/>
    <property type="evidence" value="ECO:0007669"/>
    <property type="project" value="Ensembl"/>
</dbReference>
<dbReference type="GO" id="GO:0048714">
    <property type="term" value="P:positive regulation of oligodendrocyte differentiation"/>
    <property type="evidence" value="ECO:0007669"/>
    <property type="project" value="Ensembl"/>
</dbReference>
<dbReference type="GO" id="GO:0032347">
    <property type="term" value="P:regulation of aldosterone biosynthetic process"/>
    <property type="evidence" value="ECO:0000250"/>
    <property type="project" value="UniProtKB"/>
</dbReference>
<dbReference type="GO" id="GO:0098902">
    <property type="term" value="P:regulation of membrane depolarization during action potential"/>
    <property type="evidence" value="ECO:0007669"/>
    <property type="project" value="Ensembl"/>
</dbReference>
<dbReference type="GO" id="GO:0060075">
    <property type="term" value="P:regulation of resting membrane potential"/>
    <property type="evidence" value="ECO:0000315"/>
    <property type="project" value="UniProtKB"/>
</dbReference>
<dbReference type="GO" id="GO:0060041">
    <property type="term" value="P:retina development in camera-type eye"/>
    <property type="evidence" value="ECO:0000315"/>
    <property type="project" value="MGI"/>
</dbReference>
<dbReference type="GO" id="GO:0030322">
    <property type="term" value="P:stabilization of membrane potential"/>
    <property type="evidence" value="ECO:0000315"/>
    <property type="project" value="UniProtKB"/>
</dbReference>
<dbReference type="CDD" id="cd04591">
    <property type="entry name" value="CBS_pair_voltage-gated_CLC_euk_bac"/>
    <property type="match status" value="1"/>
</dbReference>
<dbReference type="CDD" id="cd03683">
    <property type="entry name" value="ClC_1_like"/>
    <property type="match status" value="1"/>
</dbReference>
<dbReference type="FunFam" id="1.10.3080.10:FF:000002">
    <property type="entry name" value="Chloride channel 2c"/>
    <property type="match status" value="1"/>
</dbReference>
<dbReference type="FunFam" id="3.10.580.10:FF:000024">
    <property type="entry name" value="Chloride channel 2c"/>
    <property type="match status" value="1"/>
</dbReference>
<dbReference type="FunFam" id="3.10.580.10:FF:000019">
    <property type="entry name" value="Chloride voltage-gated channel 2"/>
    <property type="match status" value="1"/>
</dbReference>
<dbReference type="Gene3D" id="3.10.580.10">
    <property type="entry name" value="CBS-domain"/>
    <property type="match status" value="2"/>
</dbReference>
<dbReference type="Gene3D" id="1.10.3080.10">
    <property type="entry name" value="Clc chloride channel"/>
    <property type="match status" value="1"/>
</dbReference>
<dbReference type="InterPro" id="IPR046342">
    <property type="entry name" value="CBS_dom_sf"/>
</dbReference>
<dbReference type="InterPro" id="IPR002244">
    <property type="entry name" value="Cl-channel-2"/>
</dbReference>
<dbReference type="InterPro" id="IPR014743">
    <property type="entry name" value="Cl-channel_core"/>
</dbReference>
<dbReference type="InterPro" id="IPR050970">
    <property type="entry name" value="Cl_channel_volt-gated"/>
</dbReference>
<dbReference type="InterPro" id="IPR001807">
    <property type="entry name" value="ClC"/>
</dbReference>
<dbReference type="PANTHER" id="PTHR45720">
    <property type="entry name" value="CHLORIDE CHANNEL PROTEIN 2"/>
    <property type="match status" value="1"/>
</dbReference>
<dbReference type="PANTHER" id="PTHR45720:SF6">
    <property type="entry name" value="CHLORIDE CHANNEL PROTEIN 2"/>
    <property type="match status" value="1"/>
</dbReference>
<dbReference type="Pfam" id="PF00654">
    <property type="entry name" value="Voltage_CLC"/>
    <property type="match status" value="1"/>
</dbReference>
<dbReference type="PRINTS" id="PR00762">
    <property type="entry name" value="CLCHANNEL"/>
</dbReference>
<dbReference type="PRINTS" id="PR01113">
    <property type="entry name" value="CLCHANNEL2"/>
</dbReference>
<dbReference type="SUPFAM" id="SSF54631">
    <property type="entry name" value="CBS-domain pair"/>
    <property type="match status" value="1"/>
</dbReference>
<dbReference type="SUPFAM" id="SSF81340">
    <property type="entry name" value="Clc chloride channel"/>
    <property type="match status" value="1"/>
</dbReference>
<dbReference type="PROSITE" id="PS51371">
    <property type="entry name" value="CBS"/>
    <property type="match status" value="2"/>
</dbReference>
<sequence length="908" mass="99447">MAAATAAAAAAAAAGEGMEPRALQYEQTLMYGRYTQELGAFAKEEAARIRLGGPEPWKGSPSARATPELLEYGQSRCARCRICSVRCHKFLVSRVGEDWIFLVLLGLLMALVSWAMDYAIAVCLQAQQWMSRGLNTNILLQYLAWVTYPVVLITFSAGFTQILAPQAVGSGIPEMKTILRGVVLKEYLTLKTFVAKVIGLTCALGSGMPLGKEGPFVHIASMCAALLSKFLSLFGGIYEHESRNTEMLAAACAVGVGCCFAAPIGGVLFSIEVTSTFFAVRNYWRGFFAATFSAFIFRVLAVWNRDEETITALFKTRFRLDFPFDLQELPAFAVIGIASGFGGALFVYLNRKIVQVMRKQKTINRFLMRKRLLFPALVTLLISTLTFPPGFGQFMAGQLSQKETLVTLFDNRTWVRQGLVEDLELPSTSQAWSPPRANVFLTLVIFILMKFWMSALATTIPVPCGAFMPVFVIGAAFGRLVGESMAAWFPDGIHTDSSTYRIVPGGYAVVGAAALAGAVTHTVSTAVIVFELTGQIAHILPVMIAVILANAVAQSLQPSLYDSIIRIKKLPYLPELGWGRHQQYRVRVEDIMVRDVPHVALSCTFRDLRLALHRTKGRMLALVESPESMILLGSIERSQVVALLGAQLSPARRRQHMQKLRKAQLSPPSDQESPPSSETSIRFQVNTEDSGFSGAHGQTHKPLKPALKRGPSNSTSLQEGTTGNMESAGIALRSLFCGSPPLEATSELEKSESCDKRKLKRVRISLASDSDPEAEMSPEEILEWEEQQLDEPVNFSDCKIDPAPFQLVERTSLHKTHTIFSLLGVDHAYVTSIGRLIGIVTLKELRKAIEGSVTAQGVKVRPPLASFRDSATSSSDTETTEVHALWGPRSRHGLPREGTPSDSDDKCQ</sequence>
<comment type="function">
    <text evidence="2 3 9 10 11 12 13 14 15">Voltage-gated and osmosensitive chloride channel. Forms a homodimeric channel where each subunit has its own ion conduction pathway. Conducts double-barreled currents controlled by two types of gates, two fast glutamate gates that control each subunit independently and a slow common gate that opens and shuts off both subunits simultaneously. Displays inward rectification currents activated upon membrane hyperpolarization and extracellular hypotonicity (PubMed:18801913, PubMed:20357128, PubMed:26666914). Contributes to chloride conductance involved in neuron excitability. In hippocampal neurons, generates a significant part of resting membrane conductance and provides an additional chloride efflux pathway to prevent chloride accumulation in dendrites upon GABA receptor activation. In glia, associates with the auxiliary subunit HEPACAM/GlialCAM at astrocytic processes and myelinated fiber tracts where it may regulate transcellular chloride flux buffering extracellular chloride and potassium concentrations (PubMed:17567819, PubMed:20357128, PubMed:22405205). Regulates aldosterone production in adrenal glands. The opening of CLCN2 channels at hyperpolarized membrane potentials in the glomerulosa causes cell membrane depolarization, activation of voltage-gated calcium channels and increased expression of aldosterone synthase, the rate-limiting enzyme for aldosterone biosynthesis (By similarity) (PubMed:29403012). Contributes to chloride conductance in retinal pigment epithelium involved in phagocytosis of shed photoreceptor outer segments and photoreceptor renewal (By similarity). Conducts chloride currents at the basolateral membrane of epithelial cells with a role in chloride reabsorption rather than secretion (By similarity) (PubMed:18801913, PubMed:22079595). Permeable to small monovalent anions with chloride &gt; thiocyanate &gt; bromide &gt; nitrate &gt; iodide ion selectivity (PubMed:26666914).</text>
</comment>
<comment type="catalytic activity">
    <reaction evidence="10 11 14">
        <text>chloride(in) = chloride(out)</text>
        <dbReference type="Rhea" id="RHEA:29823"/>
        <dbReference type="ChEBI" id="CHEBI:17996"/>
    </reaction>
</comment>
<comment type="catalytic activity">
    <reaction evidence="14">
        <text>thiocyanate(in) = thiocyanate(out)</text>
        <dbReference type="Rhea" id="RHEA:75347"/>
        <dbReference type="ChEBI" id="CHEBI:18022"/>
    </reaction>
</comment>
<comment type="catalytic activity">
    <reaction evidence="14">
        <text>bromide(in) = bromide(out)</text>
        <dbReference type="Rhea" id="RHEA:75383"/>
        <dbReference type="ChEBI" id="CHEBI:15858"/>
    </reaction>
</comment>
<comment type="catalytic activity">
    <reaction evidence="2">
        <text>nitrate(in) = nitrate(out)</text>
        <dbReference type="Rhea" id="RHEA:34923"/>
        <dbReference type="ChEBI" id="CHEBI:17632"/>
    </reaction>
</comment>
<comment type="catalytic activity">
    <reaction evidence="14">
        <text>iodide(out) = iodide(in)</text>
        <dbReference type="Rhea" id="RHEA:66324"/>
        <dbReference type="ChEBI" id="CHEBI:16382"/>
    </reaction>
</comment>
<comment type="activity regulation">
    <text evidence="2 3 4 10 14">Common gate kinetics are down-regulated by intracellular ATP. Inhibited by AK-42, a derivative of meclofenamate (By similarity). Inhibited by Cd(2+) (PubMed:18801913). Inhibited by Zn(2+) and PKC activation (By similarity). Inhibited at acidic pH (By similarity). CCLN2:HEPACAM channel conductance is up-regulated upon hypo-osmolarity (PubMed:26666914).</text>
</comment>
<comment type="subunit">
    <text evidence="3 13">Homodimer (By similarity). Interacts with auxiliary subunit HEPACAM (PubMed:22405205).</text>
</comment>
<comment type="subcellular location">
    <subcellularLocation>
        <location evidence="2 13">Cell membrane</location>
        <topology>Multi-pass membrane protein</topology>
    </subcellularLocation>
    <subcellularLocation>
        <location evidence="9 13">Myelin membrane</location>
    </subcellularLocation>
    <subcellularLocation>
        <location evidence="8 10 12">Basolateral cell membrane</location>
        <topology evidence="5">Multi-pass membrane protein</topology>
    </subcellularLocation>
    <subcellularLocation>
        <location evidence="2">Cell projection</location>
        <location evidence="2">Dendritic spine membrane</location>
        <topology evidence="5">Multi-pass membrane protein</topology>
    </subcellularLocation>
    <subcellularLocation>
        <location evidence="2">Cell projection</location>
        <location evidence="2">Axon</location>
    </subcellularLocation>
    <text evidence="2 8 9 13">Sorting to the basolateral membrane is mediated by AP-1 clathrin adapter (PubMed:16155254). Localizes at axon initial segments and dendritic shaft and spikes. Colocalizes with HEPACAM and GFAP at astrocyte end-foot in contact with brain capillaries and other glial cells (By similarity) (PubMed:17567819, PubMed:22405205).</text>
</comment>
<comment type="tissue specificity">
    <text evidence="8 10 12">Expressed in the adrenal gland and brain. Expressed in intestinal epithelium (at protein level) (PubMed:16155254, PubMed:22079595). Expressed in salivary gland (at protein level) (PubMed:18801913).</text>
</comment>
<comment type="PTM">
    <text evidence="2">Phosphorylated. Activated by dephosphorylation.</text>
</comment>
<comment type="disruption phenotype">
    <text evidence="9 11 15">Develop progressive vacuolation between myelin sheaths at the white matter and the spinal cord, inflammation associated with disruption of blood-brain barrier, blindness and disfunctional nerve conduction velocity in the central auditory system. Other neurological functions including motor learning and coordination remain normal. Has normal excitatory synaptic transmission, but display increased GABAergic inhibition. Not prone to epilepsy (PubMed:17567819, PubMed:20357128). Hyperpolarization-activated chloride currents are absent in glomerulosa cells of knockout mice.</text>
</comment>
<comment type="similarity">
    <text evidence="16">Belongs to the chloride channel (TC 2.A.49) family. ClC-2/CLCN2 subfamily.</text>
</comment>
<gene>
    <name type="primary">Clcn2</name>
    <name type="synonym">Clc2</name>
</gene>
<organism>
    <name type="scientific">Mus musculus</name>
    <name type="common">Mouse</name>
    <dbReference type="NCBI Taxonomy" id="10090"/>
    <lineage>
        <taxon>Eukaryota</taxon>
        <taxon>Metazoa</taxon>
        <taxon>Chordata</taxon>
        <taxon>Craniata</taxon>
        <taxon>Vertebrata</taxon>
        <taxon>Euteleostomi</taxon>
        <taxon>Mammalia</taxon>
        <taxon>Eutheria</taxon>
        <taxon>Euarchontoglires</taxon>
        <taxon>Glires</taxon>
        <taxon>Rodentia</taxon>
        <taxon>Myomorpha</taxon>
        <taxon>Muroidea</taxon>
        <taxon>Muridae</taxon>
        <taxon>Murinae</taxon>
        <taxon>Mus</taxon>
        <taxon>Mus</taxon>
    </lineage>
</organism>
<feature type="chain" id="PRO_0000094434" description="Chloride channel protein 2">
    <location>
        <begin position="1"/>
        <end position="908"/>
    </location>
</feature>
<feature type="topological domain" description="Cytoplasmic" evidence="1">
    <location>
        <begin position="1"/>
        <end position="95"/>
    </location>
</feature>
<feature type="transmembrane region" description="Helical" evidence="1">
    <location>
        <begin position="96"/>
        <end position="129"/>
    </location>
</feature>
<feature type="transmembrane region" description="Helical" evidence="1">
    <location>
        <begin position="138"/>
        <end position="163"/>
    </location>
</feature>
<feature type="intramembrane region" description="Helical" evidence="5">
    <location>
        <begin position="172"/>
        <end position="179"/>
    </location>
</feature>
<feature type="transmembrane region" description="Helical" evidence="1">
    <location>
        <begin position="188"/>
        <end position="206"/>
    </location>
</feature>
<feature type="transmembrane region" description="Helical" evidence="1">
    <location>
        <begin position="213"/>
        <end position="231"/>
    </location>
</feature>
<feature type="intramembrane region" description="Helical" evidence="1">
    <location>
        <begin position="247"/>
        <end position="259"/>
    </location>
</feature>
<feature type="intramembrane region" description="Helical" evidence="1">
    <location>
        <begin position="263"/>
        <end position="271"/>
    </location>
</feature>
<feature type="transmembrane region" description="Helical" evidence="1">
    <location>
        <begin position="283"/>
        <end position="303"/>
    </location>
</feature>
<feature type="transmembrane region" description="Helical" evidence="1">
    <location>
        <begin position="329"/>
        <end position="357"/>
    </location>
</feature>
<feature type="transmembrane region" description="Helical" evidence="1">
    <location>
        <begin position="366"/>
        <end position="385"/>
    </location>
</feature>
<feature type="transmembrane region" description="Helical" evidence="1">
    <location>
        <begin position="437"/>
        <end position="457"/>
    </location>
</feature>
<feature type="transmembrane region" description="Helical" evidence="1">
    <location>
        <begin position="465"/>
        <end position="488"/>
    </location>
</feature>
<feature type="intramembrane region" description="Helical" evidence="1">
    <location>
        <begin position="505"/>
        <end position="519"/>
    </location>
</feature>
<feature type="intramembrane region" description="Note=Loop between two helices" evidence="1">
    <location>
        <begin position="520"/>
        <end position="521"/>
    </location>
</feature>
<feature type="intramembrane region" description="Helical" evidence="1">
    <location>
        <begin position="522"/>
        <end position="533"/>
    </location>
</feature>
<feature type="intramembrane region" description="Note=Loop between two helices" evidence="1">
    <location>
        <begin position="534"/>
        <end position="538"/>
    </location>
</feature>
<feature type="transmembrane region" description="Helical" evidence="1">
    <location>
        <begin position="539"/>
        <end position="556"/>
    </location>
</feature>
<feature type="topological domain" description="Cytoplasmic" evidence="1">
    <location>
        <begin position="557"/>
        <end position="908"/>
    </location>
</feature>
<feature type="domain" description="CBS 1" evidence="6">
    <location>
        <begin position="592"/>
        <end position="650"/>
    </location>
</feature>
<feature type="domain" description="CBS 2" evidence="6">
    <location>
        <begin position="800"/>
        <end position="860"/>
    </location>
</feature>
<feature type="region of interest" description="Essential for channel gating by both voltage and cell volume" evidence="2">
    <location>
        <begin position="24"/>
        <end position="42"/>
    </location>
</feature>
<feature type="region of interest" description="Modulates channel gating by both voltage and cell volume" evidence="2">
    <location>
        <begin position="44"/>
        <end position="57"/>
    </location>
</feature>
<feature type="region of interest" description="Disordered" evidence="7">
    <location>
        <begin position="653"/>
        <end position="722"/>
    </location>
</feature>
<feature type="region of interest" description="Disordered" evidence="7">
    <location>
        <begin position="866"/>
        <end position="908"/>
    </location>
</feature>
<feature type="short sequence motif" description="Selectivity filter part_1" evidence="1">
    <location>
        <begin position="169"/>
        <end position="173"/>
    </location>
</feature>
<feature type="short sequence motif" description="Selectivity filter part_2" evidence="1">
    <location>
        <begin position="211"/>
        <end position="215"/>
    </location>
</feature>
<feature type="short sequence motif" description="Selectivity filter part_3" evidence="1">
    <location>
        <begin position="465"/>
        <end position="469"/>
    </location>
</feature>
<feature type="short sequence motif" description="Basolateral membrane sorting" evidence="3">
    <location>
        <begin position="822"/>
        <end position="823"/>
    </location>
</feature>
<feature type="compositionally biased region" description="Basic residues" evidence="7">
    <location>
        <begin position="653"/>
        <end position="662"/>
    </location>
</feature>
<feature type="compositionally biased region" description="Low complexity" evidence="7">
    <location>
        <begin position="666"/>
        <end position="680"/>
    </location>
</feature>
<feature type="compositionally biased region" description="Polar residues" evidence="7">
    <location>
        <begin position="681"/>
        <end position="690"/>
    </location>
</feature>
<feature type="compositionally biased region" description="Basic residues" evidence="7">
    <location>
        <begin position="698"/>
        <end position="707"/>
    </location>
</feature>
<feature type="compositionally biased region" description="Polar residues" evidence="7">
    <location>
        <begin position="711"/>
        <end position="722"/>
    </location>
</feature>
<feature type="binding site" evidence="1">
    <location>
        <position position="170"/>
    </location>
    <ligand>
        <name>chloride</name>
        <dbReference type="ChEBI" id="CHEBI:17996"/>
    </ligand>
</feature>
<feature type="binding site" evidence="1">
    <location>
        <position position="467"/>
    </location>
    <ligand>
        <name>chloride</name>
        <dbReference type="ChEBI" id="CHEBI:17996"/>
    </ligand>
</feature>
<feature type="binding site" evidence="1">
    <location>
        <position position="561"/>
    </location>
    <ligand>
        <name>chloride</name>
        <dbReference type="ChEBI" id="CHEBI:17996"/>
    </ligand>
</feature>
<feature type="site" description="Protopore gate" evidence="3">
    <location>
        <position position="213"/>
    </location>
</feature>
<feature type="site" description="Couples extracellular acidification to the channel closure" evidence="4">
    <location>
        <position position="538"/>
    </location>
</feature>
<feature type="modified residue" description="Phosphothreonine" evidence="17">
    <location>
        <position position="28"/>
    </location>
</feature>
<feature type="modified residue" description="Phosphoserine" evidence="2">
    <location>
        <position position="768"/>
    </location>
</feature>
<feature type="mutagenesis site" description="Results in increased channel conductance at acidic pH." evidence="14">
    <original>H</original>
    <variation>F</variation>
    <location>
        <position position="538"/>
    </location>
</feature>
<feature type="sequence conflict" description="In Ref. 1; AAD50604." evidence="16" ref="1">
    <original>P</original>
    <variation>S</variation>
    <location>
        <position position="667"/>
    </location>
</feature>